<sequence length="230" mass="24298">MASTTLSATPTPSQLSAAKNGAYSPSRALLGKTARGLYPEKEMVSRKVTCQATSIPADRVPDMGKRQTMNLLLLGALSLPTAGMLIPYGAFFVPPSSGGGGGGIVAKDAVGNDIVAAAWLKTHGPGDRTLAQGLRGDPTYLVVENDRSLATYGINAVCTHLGCVVPWNKAENKFLCPCHGSQYNNQGKVVRGPAPLSLALSHCDISEEGKVVFVPWVETDFRTGENPWWS</sequence>
<keyword id="KW-0001">2Fe-2S</keyword>
<keyword id="KW-0150">Chloroplast</keyword>
<keyword id="KW-1015">Disulfide bond</keyword>
<keyword id="KW-0249">Electron transport</keyword>
<keyword id="KW-0408">Iron</keyword>
<keyword id="KW-0411">Iron-sulfur</keyword>
<keyword id="KW-0472">Membrane</keyword>
<keyword id="KW-0479">Metal-binding</keyword>
<keyword id="KW-0934">Plastid</keyword>
<keyword id="KW-0793">Thylakoid</keyword>
<keyword id="KW-0809">Transit peptide</keyword>
<keyword id="KW-1278">Translocase</keyword>
<keyword id="KW-0812">Transmembrane</keyword>
<keyword id="KW-1133">Transmembrane helix</keyword>
<keyword id="KW-0813">Transport</keyword>
<dbReference type="EC" id="7.1.1.6"/>
<dbReference type="EMBL" id="AF037456">
    <property type="protein sequence ID" value="AAC04807.1"/>
    <property type="molecule type" value="mRNA"/>
</dbReference>
<dbReference type="SMR" id="O49078"/>
<dbReference type="GO" id="GO:0009535">
    <property type="term" value="C:chloroplast thylakoid membrane"/>
    <property type="evidence" value="ECO:0007669"/>
    <property type="project" value="UniProtKB-SubCell"/>
</dbReference>
<dbReference type="GO" id="GO:0051537">
    <property type="term" value="F:2 iron, 2 sulfur cluster binding"/>
    <property type="evidence" value="ECO:0007669"/>
    <property type="project" value="UniProtKB-KW"/>
</dbReference>
<dbReference type="GO" id="GO:0045158">
    <property type="term" value="F:electron transporter, transferring electrons within cytochrome b6/f complex of photosystem II activity"/>
    <property type="evidence" value="ECO:0007669"/>
    <property type="project" value="InterPro"/>
</dbReference>
<dbReference type="GO" id="GO:0046872">
    <property type="term" value="F:metal ion binding"/>
    <property type="evidence" value="ECO:0007669"/>
    <property type="project" value="UniProtKB-KW"/>
</dbReference>
<dbReference type="GO" id="GO:0009496">
    <property type="term" value="F:plastoquinol--plastocyanin reductase activity"/>
    <property type="evidence" value="ECO:0007669"/>
    <property type="project" value="UniProtKB-EC"/>
</dbReference>
<dbReference type="CDD" id="cd03471">
    <property type="entry name" value="Rieske_cytochrome_b6f"/>
    <property type="match status" value="1"/>
</dbReference>
<dbReference type="FunFam" id="1.20.5.700:FF:000002">
    <property type="entry name" value="Cytochrome b6-f complex iron-sulfur subunit"/>
    <property type="match status" value="1"/>
</dbReference>
<dbReference type="FunFam" id="2.102.10.10:FF:000007">
    <property type="entry name" value="Cytochrome b6-f complex iron-sulfur subunit"/>
    <property type="match status" value="1"/>
</dbReference>
<dbReference type="Gene3D" id="2.102.10.10">
    <property type="entry name" value="Rieske [2Fe-2S] iron-sulphur domain"/>
    <property type="match status" value="1"/>
</dbReference>
<dbReference type="Gene3D" id="1.20.5.700">
    <property type="entry name" value="Single helix bin"/>
    <property type="match status" value="1"/>
</dbReference>
<dbReference type="HAMAP" id="MF_01335">
    <property type="entry name" value="Cytb6_f_Rieske"/>
    <property type="match status" value="1"/>
</dbReference>
<dbReference type="InterPro" id="IPR023960">
    <property type="entry name" value="Cyt_b6_f_Rieske"/>
</dbReference>
<dbReference type="InterPro" id="IPR017941">
    <property type="entry name" value="Rieske_2Fe-2S"/>
</dbReference>
<dbReference type="InterPro" id="IPR036922">
    <property type="entry name" value="Rieske_2Fe-2S_sf"/>
</dbReference>
<dbReference type="InterPro" id="IPR014349">
    <property type="entry name" value="Rieske_Fe-S_prot"/>
</dbReference>
<dbReference type="InterPro" id="IPR005805">
    <property type="entry name" value="Rieske_Fe-S_prot_C"/>
</dbReference>
<dbReference type="NCBIfam" id="NF045928">
    <property type="entry name" value="Cytb6fFeSPetC"/>
    <property type="match status" value="1"/>
</dbReference>
<dbReference type="NCBIfam" id="NF010001">
    <property type="entry name" value="PRK13474.1"/>
    <property type="match status" value="1"/>
</dbReference>
<dbReference type="PANTHER" id="PTHR10134">
    <property type="entry name" value="CYTOCHROME B-C1 COMPLEX SUBUNIT RIESKE, MITOCHONDRIAL"/>
    <property type="match status" value="1"/>
</dbReference>
<dbReference type="Pfam" id="PF00355">
    <property type="entry name" value="Rieske"/>
    <property type="match status" value="1"/>
</dbReference>
<dbReference type="Pfam" id="PF25471">
    <property type="entry name" value="TM_PetC"/>
    <property type="match status" value="1"/>
</dbReference>
<dbReference type="PRINTS" id="PR00162">
    <property type="entry name" value="RIESKE"/>
</dbReference>
<dbReference type="SUPFAM" id="SSF50022">
    <property type="entry name" value="ISP domain"/>
    <property type="match status" value="1"/>
</dbReference>
<dbReference type="PROSITE" id="PS51296">
    <property type="entry name" value="RIESKE"/>
    <property type="match status" value="1"/>
</dbReference>
<accession>O49078</accession>
<organism>
    <name type="scientific">Fritillaria agrestis</name>
    <name type="common">Stinkbells</name>
    <dbReference type="NCBI Taxonomy" id="64177"/>
    <lineage>
        <taxon>Eukaryota</taxon>
        <taxon>Viridiplantae</taxon>
        <taxon>Streptophyta</taxon>
        <taxon>Embryophyta</taxon>
        <taxon>Tracheophyta</taxon>
        <taxon>Spermatophyta</taxon>
        <taxon>Magnoliopsida</taxon>
        <taxon>Liliopsida</taxon>
        <taxon>Liliales</taxon>
        <taxon>Liliaceae</taxon>
        <taxon>Fritillaria</taxon>
    </lineage>
</organism>
<evidence type="ECO:0000250" key="1"/>
<evidence type="ECO:0000255" key="2"/>
<evidence type="ECO:0000255" key="3">
    <source>
        <dbReference type="HAMAP-Rule" id="MF_01335"/>
    </source>
</evidence>
<evidence type="ECO:0000256" key="4">
    <source>
        <dbReference type="SAM" id="MobiDB-lite"/>
    </source>
</evidence>
<name>UCRIA_FRIAG</name>
<gene>
    <name type="primary">petC</name>
</gene>
<protein>
    <recommendedName>
        <fullName>Cytochrome b6-f complex iron-sulfur subunit, chloroplastic</fullName>
        <ecNumber>7.1.1.6</ecNumber>
    </recommendedName>
    <alternativeName>
        <fullName>Plastohydroquinone:plastocyanin oxidoreductase iron-sulfur protein</fullName>
    </alternativeName>
    <alternativeName>
        <fullName>Rieske iron-sulfur protein</fullName>
        <shortName>ISP</shortName>
        <shortName>RISP</shortName>
    </alternativeName>
</protein>
<feature type="transit peptide" description="Chloroplast" evidence="2">
    <location>
        <begin position="1"/>
        <end position="56"/>
    </location>
</feature>
<feature type="chain" id="PRO_0000030689" description="Cytochrome b6-f complex iron-sulfur subunit, chloroplastic">
    <location>
        <begin position="57"/>
        <end position="230"/>
    </location>
</feature>
<feature type="transmembrane region" description="Helical" evidence="2">
    <location>
        <begin position="73"/>
        <end position="93"/>
    </location>
</feature>
<feature type="domain" description="Rieske">
    <location>
        <begin position="116"/>
        <end position="212"/>
    </location>
</feature>
<feature type="region of interest" description="Disordered" evidence="4">
    <location>
        <begin position="1"/>
        <end position="20"/>
    </location>
</feature>
<feature type="compositionally biased region" description="Low complexity" evidence="4">
    <location>
        <begin position="1"/>
        <end position="16"/>
    </location>
</feature>
<feature type="binding site" evidence="1">
    <location>
        <position position="158"/>
    </location>
    <ligand>
        <name>[2Fe-2S] cluster</name>
        <dbReference type="ChEBI" id="CHEBI:190135"/>
    </ligand>
</feature>
<feature type="binding site" evidence="1">
    <location>
        <position position="160"/>
    </location>
    <ligand>
        <name>[2Fe-2S] cluster</name>
        <dbReference type="ChEBI" id="CHEBI:190135"/>
    </ligand>
</feature>
<feature type="binding site" evidence="1">
    <location>
        <position position="176"/>
    </location>
    <ligand>
        <name>[2Fe-2S] cluster</name>
        <dbReference type="ChEBI" id="CHEBI:190135"/>
    </ligand>
</feature>
<feature type="binding site" evidence="1">
    <location>
        <position position="179"/>
    </location>
    <ligand>
        <name>[2Fe-2S] cluster</name>
        <dbReference type="ChEBI" id="CHEBI:190135"/>
    </ligand>
</feature>
<feature type="disulfide bond" evidence="1">
    <location>
        <begin position="163"/>
        <end position="178"/>
    </location>
</feature>
<reference key="1">
    <citation type="submission" date="1997-12" db="EMBL/GenBank/DDBJ databases">
        <title>Fritillaria genome analysis.</title>
        <authorList>
            <person name="Panico E."/>
            <person name="Baysdorfer C."/>
        </authorList>
    </citation>
    <scope>NUCLEOTIDE SEQUENCE [MRNA]</scope>
</reference>
<comment type="function">
    <text evidence="1">Component of the cytochrome b6-f complex, which mediates electron transfer between photosystem II (PSII) and photosystem I (PSI), cyclic electron flow around PSI, and state transitions.</text>
</comment>
<comment type="catalytic activity">
    <reaction>
        <text>2 oxidized [plastocyanin] + a plastoquinol + 2 H(+)(in) = 2 reduced [plastocyanin] + a plastoquinone + 4 H(+)(out)</text>
        <dbReference type="Rhea" id="RHEA:22148"/>
        <dbReference type="Rhea" id="RHEA-COMP:9561"/>
        <dbReference type="Rhea" id="RHEA-COMP:9562"/>
        <dbReference type="Rhea" id="RHEA-COMP:10039"/>
        <dbReference type="Rhea" id="RHEA-COMP:10040"/>
        <dbReference type="ChEBI" id="CHEBI:15378"/>
        <dbReference type="ChEBI" id="CHEBI:17757"/>
        <dbReference type="ChEBI" id="CHEBI:29036"/>
        <dbReference type="ChEBI" id="CHEBI:49552"/>
        <dbReference type="ChEBI" id="CHEBI:62192"/>
        <dbReference type="EC" id="7.1.1.6"/>
    </reaction>
</comment>
<comment type="cofactor">
    <cofactor evidence="1">
        <name>[2Fe-2S] cluster</name>
        <dbReference type="ChEBI" id="CHEBI:190135"/>
    </cofactor>
    <text evidence="1">Binds 1 [2Fe-2S] cluster per subunit.</text>
</comment>
<comment type="subunit">
    <text evidence="1">The 4 large subunits of the cytochrome b6-f complex are cytochrome b6, subunit IV (17 kDa polypeptide, petD), cytochrome f and the Rieske protein, while the 4 small subunits are petG, petL, petM and petN. The complex functions as a dimer (By similarity).</text>
</comment>
<comment type="subcellular location">
    <subcellularLocation>
        <location evidence="1">Plastid</location>
        <location evidence="1">Chloroplast thylakoid membrane</location>
        <topology evidence="1">Single-pass membrane protein</topology>
    </subcellularLocation>
    <text evidence="1">The transmembrane helix obliquely spans the membrane in one monomer, and its extrinsic C-terminal domain is part of the other monomer.</text>
</comment>
<comment type="miscellaneous">
    <text>This protein is 1 of 2 subunits of the cytochrome b6-f complex that are encoded in the nucleus.</text>
</comment>
<comment type="miscellaneous">
    <text>The Rieske iron-sulfur protein is a high potential 2Fe-2S protein.</text>
</comment>
<comment type="similarity">
    <text evidence="3">Belongs to the Rieske iron-sulfur protein family.</text>
</comment>
<proteinExistence type="evidence at transcript level"/>